<proteinExistence type="evidence at transcript level"/>
<organism>
    <name type="scientific">Schistosoma mansoni</name>
    <name type="common">Blood fluke</name>
    <dbReference type="NCBI Taxonomy" id="6183"/>
    <lineage>
        <taxon>Eukaryota</taxon>
        <taxon>Metazoa</taxon>
        <taxon>Spiralia</taxon>
        <taxon>Lophotrochozoa</taxon>
        <taxon>Platyhelminthes</taxon>
        <taxon>Trematoda</taxon>
        <taxon>Digenea</taxon>
        <taxon>Strigeidida</taxon>
        <taxon>Schistosomatoidea</taxon>
        <taxon>Schistosomatidae</taxon>
        <taxon>Schistosoma</taxon>
    </lineage>
</organism>
<sequence>MPVNLEYLGFKLPGNVDEKYVQFKLKYRKQYHETEDEIRFNIFKSNILKAQLYQVFVRGSAIYGVTPYSDLTTDEFARTHLTASWVVPSSRSNTPTSLGKEVNNIPKNFDWREKGAVTEVKNQGMCGSCWAFSTTGNVESQWFRKTGKLLSLSEQQLVDCDGLDDGCNGGLPSNAYESIIKMGGLMLEDNYPYDAKNEKCHLKTDGVAVYINSSVNLTQDETELAAWLYHNSTISVGMNALLLQFYQHGISHPWWIFCSKYLLDHAVLLVGYGVSEKNEPFWIVKNSWGVEWGENGYFRMYRGDGSCGINTVATSAMIY</sequence>
<reference key="1">
    <citation type="journal article" date="1994" name="Mol. Biochem. Parasitol.">
        <title>Adult Schistosoma mansoni express cathepsin L proteinase activity.</title>
        <authorList>
            <person name="Smith A.M."/>
            <person name="Dalton J.P."/>
            <person name="Clough K.A."/>
            <person name="Kilbane C.L."/>
            <person name="Harrop S.A."/>
            <person name="Hole N."/>
            <person name="Brindley P.J."/>
        </authorList>
    </citation>
    <scope>NUCLEOTIDE SEQUENCE [MRNA]</scope>
    <source>
        <strain>Puerto Rican</strain>
    </source>
</reference>
<feature type="signal peptide" evidence="2">
    <location>
        <begin position="1"/>
        <end status="unknown"/>
    </location>
</feature>
<feature type="propeptide" id="PRO_0000026279" description="Activation peptide" evidence="2">
    <location>
        <begin status="unknown"/>
        <end position="104"/>
    </location>
</feature>
<feature type="chain" id="PRO_0000026280" description="Cathepsin L">
    <location>
        <begin position="105"/>
        <end position="319"/>
    </location>
</feature>
<feature type="active site" evidence="1">
    <location>
        <position position="129"/>
    </location>
</feature>
<feature type="active site" evidence="1">
    <location>
        <position position="265"/>
    </location>
</feature>
<feature type="active site" evidence="1">
    <location>
        <position position="286"/>
    </location>
</feature>
<feature type="glycosylation site" description="N-linked (GlcNAc...) asparagine" evidence="2">
    <location>
        <position position="212"/>
    </location>
</feature>
<feature type="glycosylation site" description="N-linked (GlcNAc...) asparagine" evidence="2">
    <location>
        <position position="216"/>
    </location>
</feature>
<feature type="glycosylation site" description="N-linked (GlcNAc...) asparagine" evidence="2">
    <location>
        <position position="231"/>
    </location>
</feature>
<feature type="disulfide bond" evidence="1">
    <location>
        <begin position="126"/>
        <end position="167"/>
    </location>
</feature>
<feature type="disulfide bond" evidence="1">
    <location>
        <begin position="160"/>
        <end position="200"/>
    </location>
</feature>
<feature type="disulfide bond" evidence="1">
    <location>
        <begin position="258"/>
        <end position="307"/>
    </location>
</feature>
<keyword id="KW-1015">Disulfide bond</keyword>
<keyword id="KW-0325">Glycoprotein</keyword>
<keyword id="KW-0378">Hydrolase</keyword>
<keyword id="KW-0458">Lysosome</keyword>
<keyword id="KW-0645">Protease</keyword>
<keyword id="KW-1185">Reference proteome</keyword>
<keyword id="KW-0732">Signal</keyword>
<keyword id="KW-0788">Thiol protease</keyword>
<keyword id="KW-0865">Zymogen</keyword>
<evidence type="ECO:0000250" key="1"/>
<evidence type="ECO:0000255" key="2"/>
<evidence type="ECO:0000255" key="3">
    <source>
        <dbReference type="PROSITE-ProRule" id="PRU10088"/>
    </source>
</evidence>
<evidence type="ECO:0000255" key="4">
    <source>
        <dbReference type="PROSITE-ProRule" id="PRU10089"/>
    </source>
</evidence>
<evidence type="ECO:0000255" key="5">
    <source>
        <dbReference type="PROSITE-ProRule" id="PRU10090"/>
    </source>
</evidence>
<name>CATL_SCHMA</name>
<comment type="function">
    <text>May be crucial for metabolism of host hemoglobin.</text>
</comment>
<comment type="catalytic activity">
    <reaction>
        <text>Specificity close to that of papain. As compared to cathepsin B, cathepsin L exhibits higher activity toward protein substrates, but has little activity on Z-Arg-Arg-NHMec, and no peptidyl-dipeptidase activity.</text>
        <dbReference type="EC" id="3.4.22.15"/>
    </reaction>
</comment>
<comment type="subcellular location">
    <subcellularLocation>
        <location>Lysosome</location>
    </subcellularLocation>
</comment>
<comment type="similarity">
    <text evidence="3 4 5">Belongs to the peptidase C1 family.</text>
</comment>
<dbReference type="EC" id="3.4.22.15"/>
<dbReference type="EMBL" id="U07345">
    <property type="protein sequence ID" value="AAC46485.1"/>
    <property type="molecule type" value="mRNA"/>
</dbReference>
<dbReference type="SMR" id="Q26534"/>
<dbReference type="FunCoup" id="Q26534">
    <property type="interactions" value="154"/>
</dbReference>
<dbReference type="STRING" id="6183.Q26534"/>
<dbReference type="MEROPS" id="C01.166"/>
<dbReference type="GlyCosmos" id="Q26534">
    <property type="glycosylation" value="3 sites, No reported glycans"/>
</dbReference>
<dbReference type="eggNOG" id="KOG1542">
    <property type="taxonomic scope" value="Eukaryota"/>
</dbReference>
<dbReference type="InParanoid" id="Q26534"/>
<dbReference type="BRENDA" id="3.4.22.B49">
    <property type="organism ID" value="5608"/>
</dbReference>
<dbReference type="Proteomes" id="UP000008854">
    <property type="component" value="Unassembled WGS sequence"/>
</dbReference>
<dbReference type="GO" id="GO:0005764">
    <property type="term" value="C:lysosome"/>
    <property type="evidence" value="ECO:0007669"/>
    <property type="project" value="UniProtKB-SubCell"/>
</dbReference>
<dbReference type="GO" id="GO:0004197">
    <property type="term" value="F:cysteine-type endopeptidase activity"/>
    <property type="evidence" value="ECO:0007669"/>
    <property type="project" value="UniProtKB-EC"/>
</dbReference>
<dbReference type="GO" id="GO:0006508">
    <property type="term" value="P:proteolysis"/>
    <property type="evidence" value="ECO:0007669"/>
    <property type="project" value="UniProtKB-KW"/>
</dbReference>
<dbReference type="CDD" id="cd02248">
    <property type="entry name" value="Peptidase_C1A"/>
    <property type="match status" value="1"/>
</dbReference>
<dbReference type="FunFam" id="3.90.70.10:FF:000057">
    <property type="entry name" value="Cysteine protease RD19A"/>
    <property type="match status" value="1"/>
</dbReference>
<dbReference type="Gene3D" id="3.90.70.10">
    <property type="entry name" value="Cysteine proteinases"/>
    <property type="match status" value="1"/>
</dbReference>
<dbReference type="InterPro" id="IPR038765">
    <property type="entry name" value="Papain-like_cys_pep_sf"/>
</dbReference>
<dbReference type="InterPro" id="IPR025661">
    <property type="entry name" value="Pept_asp_AS"/>
</dbReference>
<dbReference type="InterPro" id="IPR000169">
    <property type="entry name" value="Pept_cys_AS"/>
</dbReference>
<dbReference type="InterPro" id="IPR025660">
    <property type="entry name" value="Pept_his_AS"/>
</dbReference>
<dbReference type="InterPro" id="IPR013128">
    <property type="entry name" value="Peptidase_C1A"/>
</dbReference>
<dbReference type="InterPro" id="IPR000668">
    <property type="entry name" value="Peptidase_C1A_C"/>
</dbReference>
<dbReference type="InterPro" id="IPR039417">
    <property type="entry name" value="Peptidase_C1A_papain-like"/>
</dbReference>
<dbReference type="InterPro" id="IPR013201">
    <property type="entry name" value="Prot_inhib_I29"/>
</dbReference>
<dbReference type="PANTHER" id="PTHR12411">
    <property type="entry name" value="CYSTEINE PROTEASE FAMILY C1-RELATED"/>
    <property type="match status" value="1"/>
</dbReference>
<dbReference type="Pfam" id="PF08246">
    <property type="entry name" value="Inhibitor_I29"/>
    <property type="match status" value="1"/>
</dbReference>
<dbReference type="Pfam" id="PF00112">
    <property type="entry name" value="Peptidase_C1"/>
    <property type="match status" value="1"/>
</dbReference>
<dbReference type="PRINTS" id="PR00705">
    <property type="entry name" value="PAPAIN"/>
</dbReference>
<dbReference type="SMART" id="SM00848">
    <property type="entry name" value="Inhibitor_I29"/>
    <property type="match status" value="1"/>
</dbReference>
<dbReference type="SMART" id="SM00645">
    <property type="entry name" value="Pept_C1"/>
    <property type="match status" value="1"/>
</dbReference>
<dbReference type="SUPFAM" id="SSF54001">
    <property type="entry name" value="Cysteine proteinases"/>
    <property type="match status" value="1"/>
</dbReference>
<dbReference type="PROSITE" id="PS00640">
    <property type="entry name" value="THIOL_PROTEASE_ASN"/>
    <property type="match status" value="1"/>
</dbReference>
<dbReference type="PROSITE" id="PS00139">
    <property type="entry name" value="THIOL_PROTEASE_CYS"/>
    <property type="match status" value="1"/>
</dbReference>
<dbReference type="PROSITE" id="PS00639">
    <property type="entry name" value="THIOL_PROTEASE_HIS"/>
    <property type="match status" value="1"/>
</dbReference>
<gene>
    <name type="primary">CL1</name>
</gene>
<protein>
    <recommendedName>
        <fullName>Cathepsin L</fullName>
        <ecNumber>3.4.22.15</ecNumber>
    </recommendedName>
    <alternativeName>
        <fullName>SMCL1</fullName>
    </alternativeName>
</protein>
<accession>Q26534</accession>